<protein>
    <recommendedName>
        <fullName evidence="1">Large-conductance mechanosensitive channel</fullName>
    </recommendedName>
</protein>
<accession>Q5HG71</accession>
<proteinExistence type="inferred from homology"/>
<name>MSCL_STAAC</name>
<gene>
    <name evidence="1" type="primary">mscL</name>
    <name type="ordered locus">SACOL1383</name>
</gene>
<sequence length="120" mass="13616">MLKEFKEFALKGNVLDLAIAVVMGAAFNKIISSLVENIIMPLIGKIFGSVDFAKEWSFWGIKYGLFIQSVIDFIIIAFALFIFVKIANTLMKKEEAEEEAVVEENVVLLTEIRDLLREKK</sequence>
<organism>
    <name type="scientific">Staphylococcus aureus (strain COL)</name>
    <dbReference type="NCBI Taxonomy" id="93062"/>
    <lineage>
        <taxon>Bacteria</taxon>
        <taxon>Bacillati</taxon>
        <taxon>Bacillota</taxon>
        <taxon>Bacilli</taxon>
        <taxon>Bacillales</taxon>
        <taxon>Staphylococcaceae</taxon>
        <taxon>Staphylococcus</taxon>
    </lineage>
</organism>
<feature type="chain" id="PRO_0000192460" description="Large-conductance mechanosensitive channel">
    <location>
        <begin position="1"/>
        <end position="120"/>
    </location>
</feature>
<feature type="transmembrane region" description="Helical" evidence="1">
    <location>
        <begin position="7"/>
        <end position="27"/>
    </location>
</feature>
<feature type="transmembrane region" description="Helical" evidence="1">
    <location>
        <begin position="64"/>
        <end position="84"/>
    </location>
</feature>
<dbReference type="EMBL" id="CP000046">
    <property type="protein sequence ID" value="AAW36632.1"/>
    <property type="molecule type" value="Genomic_DNA"/>
</dbReference>
<dbReference type="RefSeq" id="WP_000910489.1">
    <property type="nucleotide sequence ID" value="NZ_JBGOFO010000002.1"/>
</dbReference>
<dbReference type="SMR" id="Q5HG71"/>
<dbReference type="KEGG" id="sac:SACOL1383"/>
<dbReference type="HOGENOM" id="CLU_095787_0_0_9"/>
<dbReference type="Proteomes" id="UP000000530">
    <property type="component" value="Chromosome"/>
</dbReference>
<dbReference type="GO" id="GO:0005886">
    <property type="term" value="C:plasma membrane"/>
    <property type="evidence" value="ECO:0007669"/>
    <property type="project" value="UniProtKB-SubCell"/>
</dbReference>
<dbReference type="GO" id="GO:0008381">
    <property type="term" value="F:mechanosensitive monoatomic ion channel activity"/>
    <property type="evidence" value="ECO:0007669"/>
    <property type="project" value="UniProtKB-UniRule"/>
</dbReference>
<dbReference type="FunFam" id="1.10.1200.120:FF:000002">
    <property type="entry name" value="Large-conductance mechanosensitive channel"/>
    <property type="match status" value="1"/>
</dbReference>
<dbReference type="Gene3D" id="1.10.1200.120">
    <property type="entry name" value="Large-conductance mechanosensitive channel, MscL, domain 1"/>
    <property type="match status" value="1"/>
</dbReference>
<dbReference type="HAMAP" id="MF_00115">
    <property type="entry name" value="MscL"/>
    <property type="match status" value="1"/>
</dbReference>
<dbReference type="InterPro" id="IPR019823">
    <property type="entry name" value="Mechanosensitive_channel_CS"/>
</dbReference>
<dbReference type="InterPro" id="IPR001185">
    <property type="entry name" value="MS_channel"/>
</dbReference>
<dbReference type="InterPro" id="IPR037673">
    <property type="entry name" value="MSC/AndL"/>
</dbReference>
<dbReference type="InterPro" id="IPR036019">
    <property type="entry name" value="MscL_channel"/>
</dbReference>
<dbReference type="NCBIfam" id="TIGR00220">
    <property type="entry name" value="mscL"/>
    <property type="match status" value="1"/>
</dbReference>
<dbReference type="NCBIfam" id="NF010559">
    <property type="entry name" value="PRK13954.1"/>
    <property type="match status" value="1"/>
</dbReference>
<dbReference type="PANTHER" id="PTHR30266:SF2">
    <property type="entry name" value="LARGE-CONDUCTANCE MECHANOSENSITIVE CHANNEL"/>
    <property type="match status" value="1"/>
</dbReference>
<dbReference type="PANTHER" id="PTHR30266">
    <property type="entry name" value="MECHANOSENSITIVE CHANNEL MSCL"/>
    <property type="match status" value="1"/>
</dbReference>
<dbReference type="Pfam" id="PF01741">
    <property type="entry name" value="MscL"/>
    <property type="match status" value="1"/>
</dbReference>
<dbReference type="PRINTS" id="PR01264">
    <property type="entry name" value="MECHCHANNEL"/>
</dbReference>
<dbReference type="SUPFAM" id="SSF81330">
    <property type="entry name" value="Gated mechanosensitive channel"/>
    <property type="match status" value="1"/>
</dbReference>
<dbReference type="PROSITE" id="PS01327">
    <property type="entry name" value="MSCL"/>
    <property type="match status" value="1"/>
</dbReference>
<evidence type="ECO:0000255" key="1">
    <source>
        <dbReference type="HAMAP-Rule" id="MF_00115"/>
    </source>
</evidence>
<comment type="function">
    <text evidence="1">Channel that opens in response to stretch forces in the membrane lipid bilayer. May participate in the regulation of osmotic pressure changes within the cell.</text>
</comment>
<comment type="subunit">
    <text evidence="1">Homopentamer.</text>
</comment>
<comment type="subcellular location">
    <subcellularLocation>
        <location evidence="1">Cell membrane</location>
        <topology evidence="1">Multi-pass membrane protein</topology>
    </subcellularLocation>
</comment>
<comment type="similarity">
    <text evidence="1">Belongs to the MscL family.</text>
</comment>
<keyword id="KW-1003">Cell membrane</keyword>
<keyword id="KW-0407">Ion channel</keyword>
<keyword id="KW-0406">Ion transport</keyword>
<keyword id="KW-0472">Membrane</keyword>
<keyword id="KW-0812">Transmembrane</keyword>
<keyword id="KW-1133">Transmembrane helix</keyword>
<keyword id="KW-0813">Transport</keyword>
<reference key="1">
    <citation type="journal article" date="2005" name="J. Bacteriol.">
        <title>Insights on evolution of virulence and resistance from the complete genome analysis of an early methicillin-resistant Staphylococcus aureus strain and a biofilm-producing methicillin-resistant Staphylococcus epidermidis strain.</title>
        <authorList>
            <person name="Gill S.R."/>
            <person name="Fouts D.E."/>
            <person name="Archer G.L."/>
            <person name="Mongodin E.F."/>
            <person name="DeBoy R.T."/>
            <person name="Ravel J."/>
            <person name="Paulsen I.T."/>
            <person name="Kolonay J.F."/>
            <person name="Brinkac L.M."/>
            <person name="Beanan M.J."/>
            <person name="Dodson R.J."/>
            <person name="Daugherty S.C."/>
            <person name="Madupu R."/>
            <person name="Angiuoli S.V."/>
            <person name="Durkin A.S."/>
            <person name="Haft D.H."/>
            <person name="Vamathevan J.J."/>
            <person name="Khouri H."/>
            <person name="Utterback T.R."/>
            <person name="Lee C."/>
            <person name="Dimitrov G."/>
            <person name="Jiang L."/>
            <person name="Qin H."/>
            <person name="Weidman J."/>
            <person name="Tran K."/>
            <person name="Kang K.H."/>
            <person name="Hance I.R."/>
            <person name="Nelson K.E."/>
            <person name="Fraser C.M."/>
        </authorList>
    </citation>
    <scope>NUCLEOTIDE SEQUENCE [LARGE SCALE GENOMIC DNA]</scope>
    <source>
        <strain>COL</strain>
    </source>
</reference>